<dbReference type="EMBL" id="AB049949">
    <property type="protein sequence ID" value="BAB41002.1"/>
    <property type="molecule type" value="mRNA"/>
</dbReference>
<dbReference type="EMBL" id="AK019243">
    <property type="protein sequence ID" value="BAB31623.1"/>
    <property type="molecule type" value="mRNA"/>
</dbReference>
<dbReference type="EMBL" id="AK005206">
    <property type="protein sequence ID" value="BAB23884.1"/>
    <property type="molecule type" value="mRNA"/>
</dbReference>
<dbReference type="EMBL" id="BC024656">
    <property type="protein sequence ID" value="AAH24656.1"/>
    <property type="molecule type" value="mRNA"/>
</dbReference>
<dbReference type="CCDS" id="CCDS36817.1"/>
<dbReference type="RefSeq" id="NP_079716.1">
    <property type="nucleotide sequence ID" value="NM_025440.3"/>
</dbReference>
<dbReference type="PDB" id="7PNT">
    <property type="method" value="EM"/>
    <property type="resolution" value="3.19 A"/>
    <property type="chains" value="M=1-135"/>
</dbReference>
<dbReference type="PDB" id="7PNU">
    <property type="method" value="EM"/>
    <property type="resolution" value="3.06 A"/>
    <property type="chains" value="M=1-135"/>
</dbReference>
<dbReference type="PDB" id="7PNV">
    <property type="method" value="EM"/>
    <property type="resolution" value="3.06 A"/>
    <property type="chains" value="M=1-135"/>
</dbReference>
<dbReference type="PDB" id="7PNW">
    <property type="method" value="EM"/>
    <property type="resolution" value="3.09 A"/>
    <property type="chains" value="M=1-135"/>
</dbReference>
<dbReference type="PDBsum" id="7PNT"/>
<dbReference type="PDBsum" id="7PNU"/>
<dbReference type="PDBsum" id="7PNV"/>
<dbReference type="PDBsum" id="7PNW"/>
<dbReference type="EMDB" id="EMD-13551"/>
<dbReference type="EMDB" id="EMD-13552"/>
<dbReference type="EMDB" id="EMD-13553"/>
<dbReference type="EMDB" id="EMD-13554"/>
<dbReference type="SMR" id="Q9CPX7"/>
<dbReference type="BioGRID" id="211321">
    <property type="interactions" value="2"/>
</dbReference>
<dbReference type="ComplexPortal" id="CPX-5301">
    <property type="entry name" value="28S mitochondrial small ribosomal subunit"/>
</dbReference>
<dbReference type="FunCoup" id="Q9CPX7">
    <property type="interactions" value="2601"/>
</dbReference>
<dbReference type="STRING" id="10090.ENSMUSP00000055619"/>
<dbReference type="PhosphoSitePlus" id="Q9CPX7"/>
<dbReference type="SwissPalm" id="Q9CPX7"/>
<dbReference type="PaxDb" id="10090-ENSMUSP00000055619"/>
<dbReference type="PeptideAtlas" id="Q9CPX7"/>
<dbReference type="ProteomicsDB" id="257046"/>
<dbReference type="Pumba" id="Q9CPX7"/>
<dbReference type="Antibodypedia" id="45368">
    <property type="antibodies" value="120 antibodies from 23 providers"/>
</dbReference>
<dbReference type="DNASU" id="66242"/>
<dbReference type="Ensembl" id="ENSMUST00000061444.5">
    <property type="protein sequence ID" value="ENSMUSP00000055619.4"/>
    <property type="gene ID" value="ENSMUSG00000049960.5"/>
</dbReference>
<dbReference type="GeneID" id="66242"/>
<dbReference type="KEGG" id="mmu:66242"/>
<dbReference type="UCSC" id="uc007sjp.1">
    <property type="organism name" value="mouse"/>
</dbReference>
<dbReference type="AGR" id="MGI:1913492"/>
<dbReference type="CTD" id="51021"/>
<dbReference type="MGI" id="MGI:1913492">
    <property type="gene designation" value="Mrps16"/>
</dbReference>
<dbReference type="VEuPathDB" id="HostDB:ENSMUSG00000049960"/>
<dbReference type="eggNOG" id="KOG3419">
    <property type="taxonomic scope" value="Eukaryota"/>
</dbReference>
<dbReference type="GeneTree" id="ENSGT00390000014309"/>
<dbReference type="HOGENOM" id="CLU_100590_4_0_1"/>
<dbReference type="InParanoid" id="Q9CPX7"/>
<dbReference type="OMA" id="PNDYNER"/>
<dbReference type="OrthoDB" id="407221at2759"/>
<dbReference type="PhylomeDB" id="Q9CPX7"/>
<dbReference type="TreeFam" id="TF105637"/>
<dbReference type="Reactome" id="R-MMU-5389840">
    <property type="pathway name" value="Mitochondrial translation elongation"/>
</dbReference>
<dbReference type="Reactome" id="R-MMU-5419276">
    <property type="pathway name" value="Mitochondrial translation termination"/>
</dbReference>
<dbReference type="BioGRID-ORCS" id="66242">
    <property type="hits" value="23 hits in 76 CRISPR screens"/>
</dbReference>
<dbReference type="ChiTaRS" id="Mrps16">
    <property type="organism name" value="mouse"/>
</dbReference>
<dbReference type="PRO" id="PR:Q9CPX7"/>
<dbReference type="Proteomes" id="UP000000589">
    <property type="component" value="Chromosome 14"/>
</dbReference>
<dbReference type="RNAct" id="Q9CPX7">
    <property type="molecule type" value="protein"/>
</dbReference>
<dbReference type="Bgee" id="ENSMUSG00000049960">
    <property type="expression patterns" value="Expressed in digastric muscle group and 253 other cell types or tissues"/>
</dbReference>
<dbReference type="GO" id="GO:0005829">
    <property type="term" value="C:cytosol"/>
    <property type="evidence" value="ECO:0007669"/>
    <property type="project" value="Ensembl"/>
</dbReference>
<dbReference type="GO" id="GO:0005743">
    <property type="term" value="C:mitochondrial inner membrane"/>
    <property type="evidence" value="ECO:0000303"/>
    <property type="project" value="ComplexPortal"/>
</dbReference>
<dbReference type="GO" id="GO:0005763">
    <property type="term" value="C:mitochondrial small ribosomal subunit"/>
    <property type="evidence" value="ECO:0000250"/>
    <property type="project" value="UniProtKB"/>
</dbReference>
<dbReference type="GO" id="GO:0005739">
    <property type="term" value="C:mitochondrion"/>
    <property type="evidence" value="ECO:0007005"/>
    <property type="project" value="MGI"/>
</dbReference>
<dbReference type="GO" id="GO:0003735">
    <property type="term" value="F:structural constituent of ribosome"/>
    <property type="evidence" value="ECO:0000250"/>
    <property type="project" value="UniProtKB"/>
</dbReference>
<dbReference type="GO" id="GO:0032543">
    <property type="term" value="P:mitochondrial translation"/>
    <property type="evidence" value="ECO:0000250"/>
    <property type="project" value="UniProtKB"/>
</dbReference>
<dbReference type="FunFam" id="3.30.1320.10:FF:000004">
    <property type="entry name" value="28S ribosomal protein S16, mitochondrial"/>
    <property type="match status" value="1"/>
</dbReference>
<dbReference type="Gene3D" id="3.30.1320.10">
    <property type="match status" value="1"/>
</dbReference>
<dbReference type="HAMAP" id="MF_00385">
    <property type="entry name" value="Ribosomal_bS16"/>
    <property type="match status" value="1"/>
</dbReference>
<dbReference type="InterPro" id="IPR000307">
    <property type="entry name" value="Ribosomal_bS16"/>
</dbReference>
<dbReference type="InterPro" id="IPR023803">
    <property type="entry name" value="Ribosomal_bS16_dom_sf"/>
</dbReference>
<dbReference type="NCBIfam" id="TIGR00002">
    <property type="entry name" value="S16"/>
    <property type="match status" value="1"/>
</dbReference>
<dbReference type="PANTHER" id="PTHR12919">
    <property type="entry name" value="30S RIBOSOMAL PROTEIN S16"/>
    <property type="match status" value="1"/>
</dbReference>
<dbReference type="PANTHER" id="PTHR12919:SF20">
    <property type="entry name" value="SMALL RIBOSOMAL SUBUNIT PROTEIN BS16M"/>
    <property type="match status" value="1"/>
</dbReference>
<dbReference type="Pfam" id="PF00886">
    <property type="entry name" value="Ribosomal_S16"/>
    <property type="match status" value="1"/>
</dbReference>
<dbReference type="SUPFAM" id="SSF54565">
    <property type="entry name" value="Ribosomal protein S16"/>
    <property type="match status" value="1"/>
</dbReference>
<keyword id="KW-0002">3D-structure</keyword>
<keyword id="KW-0496">Mitochondrion</keyword>
<keyword id="KW-1185">Reference proteome</keyword>
<keyword id="KW-0687">Ribonucleoprotein</keyword>
<keyword id="KW-0689">Ribosomal protein</keyword>
<keyword id="KW-0809">Transit peptide</keyword>
<evidence type="ECO:0000250" key="1">
    <source>
        <dbReference type="UniProtKB" id="Q9Y3D3"/>
    </source>
</evidence>
<evidence type="ECO:0000255" key="2"/>
<evidence type="ECO:0000305" key="3"/>
<organism>
    <name type="scientific">Mus musculus</name>
    <name type="common">Mouse</name>
    <dbReference type="NCBI Taxonomy" id="10090"/>
    <lineage>
        <taxon>Eukaryota</taxon>
        <taxon>Metazoa</taxon>
        <taxon>Chordata</taxon>
        <taxon>Craniata</taxon>
        <taxon>Vertebrata</taxon>
        <taxon>Euteleostomi</taxon>
        <taxon>Mammalia</taxon>
        <taxon>Eutheria</taxon>
        <taxon>Euarchontoglires</taxon>
        <taxon>Glires</taxon>
        <taxon>Rodentia</taxon>
        <taxon>Myomorpha</taxon>
        <taxon>Muroidea</taxon>
        <taxon>Muridae</taxon>
        <taxon>Murinae</taxon>
        <taxon>Mus</taxon>
        <taxon>Mus</taxon>
    </lineage>
</organism>
<accession>Q9CPX7</accession>
<reference key="1">
    <citation type="journal article" date="2001" name="J. Biol. Chem.">
        <title>Proteomic analysis of the mammalian mitochondrial ribosome. Identification of protein components in the 28S small subunit.</title>
        <authorList>
            <person name="Suzuki T."/>
            <person name="Terasaki M."/>
            <person name="Takemoto-Hori C."/>
            <person name="Hanada T."/>
            <person name="Ueda T."/>
            <person name="Wada A."/>
            <person name="Watanabe K."/>
        </authorList>
    </citation>
    <scope>NUCLEOTIDE SEQUENCE [MRNA]</scope>
</reference>
<reference key="2">
    <citation type="journal article" date="2005" name="Science">
        <title>The transcriptional landscape of the mammalian genome.</title>
        <authorList>
            <person name="Carninci P."/>
            <person name="Kasukawa T."/>
            <person name="Katayama S."/>
            <person name="Gough J."/>
            <person name="Frith M.C."/>
            <person name="Maeda N."/>
            <person name="Oyama R."/>
            <person name="Ravasi T."/>
            <person name="Lenhard B."/>
            <person name="Wells C."/>
            <person name="Kodzius R."/>
            <person name="Shimokawa K."/>
            <person name="Bajic V.B."/>
            <person name="Brenner S.E."/>
            <person name="Batalov S."/>
            <person name="Forrest A.R."/>
            <person name="Zavolan M."/>
            <person name="Davis M.J."/>
            <person name="Wilming L.G."/>
            <person name="Aidinis V."/>
            <person name="Allen J.E."/>
            <person name="Ambesi-Impiombato A."/>
            <person name="Apweiler R."/>
            <person name="Aturaliya R.N."/>
            <person name="Bailey T.L."/>
            <person name="Bansal M."/>
            <person name="Baxter L."/>
            <person name="Beisel K.W."/>
            <person name="Bersano T."/>
            <person name="Bono H."/>
            <person name="Chalk A.M."/>
            <person name="Chiu K.P."/>
            <person name="Choudhary V."/>
            <person name="Christoffels A."/>
            <person name="Clutterbuck D.R."/>
            <person name="Crowe M.L."/>
            <person name="Dalla E."/>
            <person name="Dalrymple B.P."/>
            <person name="de Bono B."/>
            <person name="Della Gatta G."/>
            <person name="di Bernardo D."/>
            <person name="Down T."/>
            <person name="Engstrom P."/>
            <person name="Fagiolini M."/>
            <person name="Faulkner G."/>
            <person name="Fletcher C.F."/>
            <person name="Fukushima T."/>
            <person name="Furuno M."/>
            <person name="Futaki S."/>
            <person name="Gariboldi M."/>
            <person name="Georgii-Hemming P."/>
            <person name="Gingeras T.R."/>
            <person name="Gojobori T."/>
            <person name="Green R.E."/>
            <person name="Gustincich S."/>
            <person name="Harbers M."/>
            <person name="Hayashi Y."/>
            <person name="Hensch T.K."/>
            <person name="Hirokawa N."/>
            <person name="Hill D."/>
            <person name="Huminiecki L."/>
            <person name="Iacono M."/>
            <person name="Ikeo K."/>
            <person name="Iwama A."/>
            <person name="Ishikawa T."/>
            <person name="Jakt M."/>
            <person name="Kanapin A."/>
            <person name="Katoh M."/>
            <person name="Kawasawa Y."/>
            <person name="Kelso J."/>
            <person name="Kitamura H."/>
            <person name="Kitano H."/>
            <person name="Kollias G."/>
            <person name="Krishnan S.P."/>
            <person name="Kruger A."/>
            <person name="Kummerfeld S.K."/>
            <person name="Kurochkin I.V."/>
            <person name="Lareau L.F."/>
            <person name="Lazarevic D."/>
            <person name="Lipovich L."/>
            <person name="Liu J."/>
            <person name="Liuni S."/>
            <person name="McWilliam S."/>
            <person name="Madan Babu M."/>
            <person name="Madera M."/>
            <person name="Marchionni L."/>
            <person name="Matsuda H."/>
            <person name="Matsuzawa S."/>
            <person name="Miki H."/>
            <person name="Mignone F."/>
            <person name="Miyake S."/>
            <person name="Morris K."/>
            <person name="Mottagui-Tabar S."/>
            <person name="Mulder N."/>
            <person name="Nakano N."/>
            <person name="Nakauchi H."/>
            <person name="Ng P."/>
            <person name="Nilsson R."/>
            <person name="Nishiguchi S."/>
            <person name="Nishikawa S."/>
            <person name="Nori F."/>
            <person name="Ohara O."/>
            <person name="Okazaki Y."/>
            <person name="Orlando V."/>
            <person name="Pang K.C."/>
            <person name="Pavan W.J."/>
            <person name="Pavesi G."/>
            <person name="Pesole G."/>
            <person name="Petrovsky N."/>
            <person name="Piazza S."/>
            <person name="Reed J."/>
            <person name="Reid J.F."/>
            <person name="Ring B.Z."/>
            <person name="Ringwald M."/>
            <person name="Rost B."/>
            <person name="Ruan Y."/>
            <person name="Salzberg S.L."/>
            <person name="Sandelin A."/>
            <person name="Schneider C."/>
            <person name="Schoenbach C."/>
            <person name="Sekiguchi K."/>
            <person name="Semple C.A."/>
            <person name="Seno S."/>
            <person name="Sessa L."/>
            <person name="Sheng Y."/>
            <person name="Shibata Y."/>
            <person name="Shimada H."/>
            <person name="Shimada K."/>
            <person name="Silva D."/>
            <person name="Sinclair B."/>
            <person name="Sperling S."/>
            <person name="Stupka E."/>
            <person name="Sugiura K."/>
            <person name="Sultana R."/>
            <person name="Takenaka Y."/>
            <person name="Taki K."/>
            <person name="Tammoja K."/>
            <person name="Tan S.L."/>
            <person name="Tang S."/>
            <person name="Taylor M.S."/>
            <person name="Tegner J."/>
            <person name="Teichmann S.A."/>
            <person name="Ueda H.R."/>
            <person name="van Nimwegen E."/>
            <person name="Verardo R."/>
            <person name="Wei C.L."/>
            <person name="Yagi K."/>
            <person name="Yamanishi H."/>
            <person name="Zabarovsky E."/>
            <person name="Zhu S."/>
            <person name="Zimmer A."/>
            <person name="Hide W."/>
            <person name="Bult C."/>
            <person name="Grimmond S.M."/>
            <person name="Teasdale R.D."/>
            <person name="Liu E.T."/>
            <person name="Brusic V."/>
            <person name="Quackenbush J."/>
            <person name="Wahlestedt C."/>
            <person name="Mattick J.S."/>
            <person name="Hume D.A."/>
            <person name="Kai C."/>
            <person name="Sasaki D."/>
            <person name="Tomaru Y."/>
            <person name="Fukuda S."/>
            <person name="Kanamori-Katayama M."/>
            <person name="Suzuki M."/>
            <person name="Aoki J."/>
            <person name="Arakawa T."/>
            <person name="Iida J."/>
            <person name="Imamura K."/>
            <person name="Itoh M."/>
            <person name="Kato T."/>
            <person name="Kawaji H."/>
            <person name="Kawagashira N."/>
            <person name="Kawashima T."/>
            <person name="Kojima M."/>
            <person name="Kondo S."/>
            <person name="Konno H."/>
            <person name="Nakano K."/>
            <person name="Ninomiya N."/>
            <person name="Nishio T."/>
            <person name="Okada M."/>
            <person name="Plessy C."/>
            <person name="Shibata K."/>
            <person name="Shiraki T."/>
            <person name="Suzuki S."/>
            <person name="Tagami M."/>
            <person name="Waki K."/>
            <person name="Watahiki A."/>
            <person name="Okamura-Oho Y."/>
            <person name="Suzuki H."/>
            <person name="Kawai J."/>
            <person name="Hayashizaki Y."/>
        </authorList>
    </citation>
    <scope>NUCLEOTIDE SEQUENCE [LARGE SCALE MRNA]</scope>
    <source>
        <strain>C57BL/6J</strain>
        <tissue>Cerebellum</tissue>
        <tissue>Embryo</tissue>
    </source>
</reference>
<reference key="3">
    <citation type="journal article" date="2004" name="Genome Res.">
        <title>The status, quality, and expansion of the NIH full-length cDNA project: the Mammalian Gene Collection (MGC).</title>
        <authorList>
            <consortium name="The MGC Project Team"/>
        </authorList>
    </citation>
    <scope>NUCLEOTIDE SEQUENCE [LARGE SCALE MRNA]</scope>
    <source>
        <strain>C57BL/6J</strain>
        <tissue>Mammary tumor</tissue>
    </source>
</reference>
<reference key="4">
    <citation type="journal article" date="2010" name="Cell">
        <title>A tissue-specific atlas of mouse protein phosphorylation and expression.</title>
        <authorList>
            <person name="Huttlin E.L."/>
            <person name="Jedrychowski M.P."/>
            <person name="Elias J.E."/>
            <person name="Goswami T."/>
            <person name="Rad R."/>
            <person name="Beausoleil S.A."/>
            <person name="Villen J."/>
            <person name="Haas W."/>
            <person name="Sowa M.E."/>
            <person name="Gygi S.P."/>
        </authorList>
    </citation>
    <scope>IDENTIFICATION BY MASS SPECTROMETRY [LARGE SCALE ANALYSIS]</scope>
    <source>
        <tissue>Brown adipose tissue</tissue>
        <tissue>Heart</tissue>
        <tissue>Kidney</tissue>
        <tissue>Liver</tissue>
        <tissue>Testis</tissue>
    </source>
</reference>
<comment type="subunit">
    <text evidence="1">Component of the mitochondrial ribosome small subunit (28S) which comprises a 12S rRNA and about 30 distinct proteins.</text>
</comment>
<comment type="subcellular location">
    <subcellularLocation>
        <location evidence="1">Mitochondrion</location>
    </subcellularLocation>
</comment>
<comment type="similarity">
    <text evidence="3">Belongs to the bacterial ribosomal protein bS16 family.</text>
</comment>
<protein>
    <recommendedName>
        <fullName evidence="3">Small ribosomal subunit protein bS16m</fullName>
    </recommendedName>
    <alternativeName>
        <fullName>28S ribosomal protein S16, mitochondrial</fullName>
        <shortName>MRP-S16</shortName>
        <shortName>S16mt</shortName>
    </alternativeName>
</protein>
<proteinExistence type="evidence at protein level"/>
<gene>
    <name type="primary">Mrps16</name>
    <name type="synonym">Rpms16</name>
</gene>
<sequence length="135" mass="15192">MVQLTTIFCKAYHGGHLTIRLALGGCTNRPFYRIVAAHNKCPRDGRFVEQLGSYDPLPNSHGEKLVALNLDRIRHWIGCGAHLSKPMEKLLGLSGFFPLHPMMITNAERLRRRRAREVLLASQKAESEAKETEAS</sequence>
<name>RT16_MOUSE</name>
<feature type="transit peptide" description="Mitochondrion" evidence="2">
    <location>
        <begin position="1"/>
        <end position="34"/>
    </location>
</feature>
<feature type="chain" id="PRO_0000030619" description="Small ribosomal subunit protein bS16m">
    <location>
        <begin position="35"/>
        <end position="135"/>
    </location>
</feature>